<dbReference type="EC" id="2.6.99.2" evidence="1"/>
<dbReference type="EMBL" id="CP001340">
    <property type="protein sequence ID" value="ACL95091.1"/>
    <property type="molecule type" value="Genomic_DNA"/>
</dbReference>
<dbReference type="RefSeq" id="WP_010919431.1">
    <property type="nucleotide sequence ID" value="NC_011916.1"/>
</dbReference>
<dbReference type="RefSeq" id="YP_002516999.1">
    <property type="nucleotide sequence ID" value="NC_011916.1"/>
</dbReference>
<dbReference type="SMR" id="B8H623"/>
<dbReference type="GeneID" id="7331604"/>
<dbReference type="KEGG" id="ccs:CCNA_01626"/>
<dbReference type="PATRIC" id="fig|565050.3.peg.1604"/>
<dbReference type="HOGENOM" id="CLU_074563_0_0_5"/>
<dbReference type="OrthoDB" id="9806590at2"/>
<dbReference type="PhylomeDB" id="B8H623"/>
<dbReference type="UniPathway" id="UPA00244">
    <property type="reaction ID" value="UER00313"/>
</dbReference>
<dbReference type="Proteomes" id="UP000001364">
    <property type="component" value="Chromosome"/>
</dbReference>
<dbReference type="GO" id="GO:0005829">
    <property type="term" value="C:cytosol"/>
    <property type="evidence" value="ECO:0007669"/>
    <property type="project" value="TreeGrafter"/>
</dbReference>
<dbReference type="GO" id="GO:0033856">
    <property type="term" value="F:pyridoxine 5'-phosphate synthase activity"/>
    <property type="evidence" value="ECO:0007669"/>
    <property type="project" value="UniProtKB-EC"/>
</dbReference>
<dbReference type="GO" id="GO:0008615">
    <property type="term" value="P:pyridoxine biosynthetic process"/>
    <property type="evidence" value="ECO:0007669"/>
    <property type="project" value="UniProtKB-UniRule"/>
</dbReference>
<dbReference type="CDD" id="cd00003">
    <property type="entry name" value="PNPsynthase"/>
    <property type="match status" value="1"/>
</dbReference>
<dbReference type="Gene3D" id="3.20.20.70">
    <property type="entry name" value="Aldolase class I"/>
    <property type="match status" value="1"/>
</dbReference>
<dbReference type="HAMAP" id="MF_00279">
    <property type="entry name" value="PdxJ"/>
    <property type="match status" value="1"/>
</dbReference>
<dbReference type="InterPro" id="IPR013785">
    <property type="entry name" value="Aldolase_TIM"/>
</dbReference>
<dbReference type="InterPro" id="IPR004569">
    <property type="entry name" value="PyrdxlP_synth_PdxJ"/>
</dbReference>
<dbReference type="InterPro" id="IPR036130">
    <property type="entry name" value="Pyridoxine-5'_phos_synth"/>
</dbReference>
<dbReference type="NCBIfam" id="TIGR00559">
    <property type="entry name" value="pdxJ"/>
    <property type="match status" value="1"/>
</dbReference>
<dbReference type="NCBIfam" id="NF003624">
    <property type="entry name" value="PRK05265.1-2"/>
    <property type="match status" value="1"/>
</dbReference>
<dbReference type="NCBIfam" id="NF003625">
    <property type="entry name" value="PRK05265.1-3"/>
    <property type="match status" value="1"/>
</dbReference>
<dbReference type="NCBIfam" id="NF003627">
    <property type="entry name" value="PRK05265.1-5"/>
    <property type="match status" value="1"/>
</dbReference>
<dbReference type="PANTHER" id="PTHR30456">
    <property type="entry name" value="PYRIDOXINE 5'-PHOSPHATE SYNTHASE"/>
    <property type="match status" value="1"/>
</dbReference>
<dbReference type="PANTHER" id="PTHR30456:SF0">
    <property type="entry name" value="PYRIDOXINE 5'-PHOSPHATE SYNTHASE"/>
    <property type="match status" value="1"/>
</dbReference>
<dbReference type="Pfam" id="PF03740">
    <property type="entry name" value="PdxJ"/>
    <property type="match status" value="1"/>
</dbReference>
<dbReference type="SUPFAM" id="SSF63892">
    <property type="entry name" value="Pyridoxine 5'-phosphate synthase"/>
    <property type="match status" value="1"/>
</dbReference>
<evidence type="ECO:0000255" key="1">
    <source>
        <dbReference type="HAMAP-Rule" id="MF_00279"/>
    </source>
</evidence>
<reference key="1">
    <citation type="journal article" date="2010" name="J. Bacteriol.">
        <title>The genetic basis of laboratory adaptation in Caulobacter crescentus.</title>
        <authorList>
            <person name="Marks M.E."/>
            <person name="Castro-Rojas C.M."/>
            <person name="Teiling C."/>
            <person name="Du L."/>
            <person name="Kapatral V."/>
            <person name="Walunas T.L."/>
            <person name="Crosson S."/>
        </authorList>
    </citation>
    <scope>NUCLEOTIDE SEQUENCE [LARGE SCALE GENOMIC DNA]</scope>
    <source>
        <strain>NA1000 / CB15N</strain>
    </source>
</reference>
<organism>
    <name type="scientific">Caulobacter vibrioides (strain NA1000 / CB15N)</name>
    <name type="common">Caulobacter crescentus</name>
    <dbReference type="NCBI Taxonomy" id="565050"/>
    <lineage>
        <taxon>Bacteria</taxon>
        <taxon>Pseudomonadati</taxon>
        <taxon>Pseudomonadota</taxon>
        <taxon>Alphaproteobacteria</taxon>
        <taxon>Caulobacterales</taxon>
        <taxon>Caulobacteraceae</taxon>
        <taxon>Caulobacter</taxon>
    </lineage>
</organism>
<protein>
    <recommendedName>
        <fullName evidence="1">Pyridoxine 5'-phosphate synthase</fullName>
        <shortName evidence="1">PNP synthase</shortName>
        <ecNumber evidence="1">2.6.99.2</ecNumber>
    </recommendedName>
</protein>
<comment type="function">
    <text evidence="1">Catalyzes the complicated ring closure reaction between the two acyclic compounds 1-deoxy-D-xylulose-5-phosphate (DXP) and 3-amino-2-oxopropyl phosphate (1-amino-acetone-3-phosphate or AAP) to form pyridoxine 5'-phosphate (PNP) and inorganic phosphate.</text>
</comment>
<comment type="catalytic activity">
    <reaction evidence="1">
        <text>3-amino-2-oxopropyl phosphate + 1-deoxy-D-xylulose 5-phosphate = pyridoxine 5'-phosphate + phosphate + 2 H2O + H(+)</text>
        <dbReference type="Rhea" id="RHEA:15265"/>
        <dbReference type="ChEBI" id="CHEBI:15377"/>
        <dbReference type="ChEBI" id="CHEBI:15378"/>
        <dbReference type="ChEBI" id="CHEBI:43474"/>
        <dbReference type="ChEBI" id="CHEBI:57279"/>
        <dbReference type="ChEBI" id="CHEBI:57792"/>
        <dbReference type="ChEBI" id="CHEBI:58589"/>
        <dbReference type="EC" id="2.6.99.2"/>
    </reaction>
</comment>
<comment type="pathway">
    <text evidence="1">Cofactor biosynthesis; pyridoxine 5'-phosphate biosynthesis; pyridoxine 5'-phosphate from D-erythrose 4-phosphate: step 5/5.</text>
</comment>
<comment type="subunit">
    <text evidence="1">Homooctamer; tetramer of dimers.</text>
</comment>
<comment type="subcellular location">
    <subcellularLocation>
        <location evidence="1">Cytoplasm</location>
    </subcellularLocation>
</comment>
<comment type="similarity">
    <text evidence="1">Belongs to the PNP synthase family.</text>
</comment>
<name>PDXJ_CAUVN</name>
<sequence>MSLRLGVNIDHVATIRNARGASYPEPVRAAELALIAGADGITAHLREDRRHISDADIAVLTDLCHKRGKPLNFEMAVTDEMVGIALNARPHAACLVPERREEVTTEGGLDVIKGQKRIADATARLRTVGARVSLFIEPDPDQIRACVTAGAQVVELHTGAYCDAARAGETARAEAILKRLKAGAALAHELGLEVHAGHGIDYATVKPVAAIPQIAELNIGHFLIGEAIFVGLPEAIHRMRALMEAARVELEVLA</sequence>
<accession>B8H623</accession>
<proteinExistence type="inferred from homology"/>
<keyword id="KW-0963">Cytoplasm</keyword>
<keyword id="KW-0664">Pyridoxine biosynthesis</keyword>
<keyword id="KW-1185">Reference proteome</keyword>
<keyword id="KW-0808">Transferase</keyword>
<feature type="chain" id="PRO_1000132547" description="Pyridoxine 5'-phosphate synthase">
    <location>
        <begin position="1"/>
        <end position="254"/>
    </location>
</feature>
<feature type="active site" description="Proton acceptor" evidence="1">
    <location>
        <position position="44"/>
    </location>
</feature>
<feature type="active site" description="Proton acceptor" evidence="1">
    <location>
        <position position="74"/>
    </location>
</feature>
<feature type="active site" description="Proton donor" evidence="1">
    <location>
        <position position="198"/>
    </location>
</feature>
<feature type="binding site" evidence="1">
    <location>
        <position position="8"/>
    </location>
    <ligand>
        <name>3-amino-2-oxopropyl phosphate</name>
        <dbReference type="ChEBI" id="CHEBI:57279"/>
    </ligand>
</feature>
<feature type="binding site" evidence="1">
    <location>
        <begin position="10"/>
        <end position="11"/>
    </location>
    <ligand>
        <name>1-deoxy-D-xylulose 5-phosphate</name>
        <dbReference type="ChEBI" id="CHEBI:57792"/>
    </ligand>
</feature>
<feature type="binding site" evidence="1">
    <location>
        <position position="19"/>
    </location>
    <ligand>
        <name>3-amino-2-oxopropyl phosphate</name>
        <dbReference type="ChEBI" id="CHEBI:57279"/>
    </ligand>
</feature>
<feature type="binding site" evidence="1">
    <location>
        <position position="46"/>
    </location>
    <ligand>
        <name>1-deoxy-D-xylulose 5-phosphate</name>
        <dbReference type="ChEBI" id="CHEBI:57792"/>
    </ligand>
</feature>
<feature type="binding site" evidence="1">
    <location>
        <position position="51"/>
    </location>
    <ligand>
        <name>1-deoxy-D-xylulose 5-phosphate</name>
        <dbReference type="ChEBI" id="CHEBI:57792"/>
    </ligand>
</feature>
<feature type="binding site" evidence="1">
    <location>
        <position position="104"/>
    </location>
    <ligand>
        <name>1-deoxy-D-xylulose 5-phosphate</name>
        <dbReference type="ChEBI" id="CHEBI:57792"/>
    </ligand>
</feature>
<feature type="binding site" evidence="1">
    <location>
        <position position="199"/>
    </location>
    <ligand>
        <name>3-amino-2-oxopropyl phosphate</name>
        <dbReference type="ChEBI" id="CHEBI:57279"/>
    </ligand>
</feature>
<feature type="binding site" evidence="1">
    <location>
        <begin position="220"/>
        <end position="221"/>
    </location>
    <ligand>
        <name>3-amino-2-oxopropyl phosphate</name>
        <dbReference type="ChEBI" id="CHEBI:57279"/>
    </ligand>
</feature>
<feature type="site" description="Transition state stabilizer" evidence="1">
    <location>
        <position position="155"/>
    </location>
</feature>
<gene>
    <name evidence="1" type="primary">pdxJ</name>
    <name type="ordered locus">CCNA_01626</name>
</gene>